<reference key="1">
    <citation type="journal article" date="2004" name="Toxicon">
        <title>Novel conopeptides of the I-superfamily occur in several clades of cone snails.</title>
        <authorList>
            <person name="Kauferstein S."/>
            <person name="Huys I."/>
            <person name="Kuch U."/>
            <person name="Melaun C."/>
            <person name="Tytgat J."/>
            <person name="Mebs D."/>
        </authorList>
    </citation>
    <scope>NUCLEOTIDE SEQUENCE [MRNA]</scope>
    <source>
        <tissue>Venom duct</tissue>
    </source>
</reference>
<proteinExistence type="evidence at transcript level"/>
<evidence type="ECO:0000250" key="1"/>
<evidence type="ECO:0000250" key="2">
    <source>
        <dbReference type="UniProtKB" id="Q7Z094"/>
    </source>
</evidence>
<evidence type="ECO:0000255" key="3"/>
<evidence type="ECO:0000305" key="4"/>
<dbReference type="EMBL" id="AJ748254">
    <property type="protein sequence ID" value="CAG38081.1"/>
    <property type="molecule type" value="mRNA"/>
</dbReference>
<dbReference type="ConoServer" id="1085">
    <property type="toxin name" value="Vx11.1 precursor"/>
</dbReference>
<dbReference type="GO" id="GO:0005576">
    <property type="term" value="C:extracellular region"/>
    <property type="evidence" value="ECO:0007669"/>
    <property type="project" value="UniProtKB-SubCell"/>
</dbReference>
<dbReference type="GO" id="GO:0015459">
    <property type="term" value="F:potassium channel regulator activity"/>
    <property type="evidence" value="ECO:0007669"/>
    <property type="project" value="UniProtKB-KW"/>
</dbReference>
<dbReference type="GO" id="GO:0090729">
    <property type="term" value="F:toxin activity"/>
    <property type="evidence" value="ECO:0007669"/>
    <property type="project" value="UniProtKB-KW"/>
</dbReference>
<dbReference type="InterPro" id="IPR013141">
    <property type="entry name" value="Conotoxin-I_CS"/>
</dbReference>
<dbReference type="InterPro" id="IPR020242">
    <property type="entry name" value="Conotoxin_I2"/>
</dbReference>
<dbReference type="Pfam" id="PF17557">
    <property type="entry name" value="Conotoxin_I2"/>
    <property type="match status" value="1"/>
</dbReference>
<dbReference type="PROSITE" id="PS60019">
    <property type="entry name" value="I_CONOTOXIN"/>
    <property type="match status" value="1"/>
</dbReference>
<feature type="signal peptide" evidence="3">
    <location>
        <begin position="1"/>
        <end position="26"/>
    </location>
</feature>
<feature type="chain" id="PRO_0000035118" description="Kappa-conotoxin-like 1">
    <location>
        <begin position="27"/>
        <end position="59"/>
    </location>
</feature>
<feature type="propeptide" id="PRO_0000035119" evidence="1">
    <location>
        <begin position="63"/>
        <end position="67"/>
    </location>
</feature>
<feature type="modified residue" description="Isoleucine amide" evidence="1">
    <location>
        <position position="59"/>
    </location>
</feature>
<feature type="disulfide bond" evidence="2">
    <location>
        <begin position="29"/>
        <end position="43"/>
    </location>
</feature>
<feature type="disulfide bond" evidence="2">
    <location>
        <begin position="36"/>
        <end position="48"/>
    </location>
</feature>
<feature type="disulfide bond" evidence="2">
    <location>
        <begin position="42"/>
        <end position="51"/>
    </location>
</feature>
<feature type="disulfide bond" evidence="2">
    <location>
        <begin position="47"/>
        <end position="55"/>
    </location>
</feature>
<accession>P69500</accession>
<accession>Q59AA3</accession>
<sequence>MMFRLTSVSCFLLVIACLNLFQVVLTSRCFPPGIYCTPYLPCCWGICCDTCRNVCHLRIGKRATFQE</sequence>
<organism>
    <name type="scientific">Conus vexillum</name>
    <name type="common">Flag cone</name>
    <dbReference type="NCBI Taxonomy" id="89431"/>
    <lineage>
        <taxon>Eukaryota</taxon>
        <taxon>Metazoa</taxon>
        <taxon>Spiralia</taxon>
        <taxon>Lophotrochozoa</taxon>
        <taxon>Mollusca</taxon>
        <taxon>Gastropoda</taxon>
        <taxon>Caenogastropoda</taxon>
        <taxon>Neogastropoda</taxon>
        <taxon>Conoidea</taxon>
        <taxon>Conidae</taxon>
        <taxon>Conus</taxon>
        <taxon>Rhizoconus</taxon>
    </lineage>
</organism>
<keyword id="KW-0027">Amidation</keyword>
<keyword id="KW-0165">Cleavage on pair of basic residues</keyword>
<keyword id="KW-1015">Disulfide bond</keyword>
<keyword id="KW-0872">Ion channel impairing toxin</keyword>
<keyword id="KW-0528">Neurotoxin</keyword>
<keyword id="KW-0632">Potassium channel impairing toxin</keyword>
<keyword id="KW-0964">Secreted</keyword>
<keyword id="KW-0732">Signal</keyword>
<keyword id="KW-0800">Toxin</keyword>
<keyword id="KW-1220">Voltage-gated potassium channel impairing toxin</keyword>
<comment type="function">
    <text evidence="1">Inhibits the vertebrate voltage-gated potassium channels Kv1.1/KCNA1 and Kv1.3/KCNA3.</text>
</comment>
<comment type="subcellular location">
    <subcellularLocation>
        <location evidence="1">Secreted</location>
    </subcellularLocation>
</comment>
<comment type="tissue specificity">
    <text>Expressed by the venom duct.</text>
</comment>
<comment type="domain">
    <text>The cysteine framework is XI (C-C-CC-CC-C-C).</text>
</comment>
<comment type="similarity">
    <text evidence="4">Belongs to the conotoxin I2 superfamily.</text>
</comment>
<name>I21_CONVX</name>
<protein>
    <recommendedName>
        <fullName>Kappa-conotoxin-like 1</fullName>
    </recommendedName>
</protein>